<reference evidence="22 24" key="1">
    <citation type="journal article" date="2002" name="J. Clin. Endocrinol. Metab.">
        <title>Identification and characterization of a putative human iodide transporter located at the apical membrane of thyrocytes.</title>
        <authorList>
            <person name="Rodriguez A.-M."/>
            <person name="Perron B."/>
            <person name="Lacroix L."/>
            <person name="Caillou B."/>
            <person name="Leblanc G."/>
            <person name="Schlumberger M."/>
            <person name="Bidart J.-M."/>
            <person name="Pourcher T."/>
        </authorList>
    </citation>
    <scope>NUCLEOTIDE SEQUENCE [MRNA]</scope>
    <scope>FUNCTION</scope>
    <scope>SUBCELLULAR LOCATION</scope>
    <scope>TISSUE SPECIFICITY</scope>
    <scope>ACTIVITY REGULATION</scope>
    <scope>TRANSPORTER ACTIVITY</scope>
    <source>
        <tissue evidence="24">Kidney</tissue>
    </source>
</reference>
<reference evidence="22 25" key="2">
    <citation type="journal article" date="2003" name="Proc. Natl. Acad. Sci. U.S.A.">
        <title>SLC5A8, a sodium transporter, is a tumor suppressor gene silenced by methylation in human colon aberrant crypt foci and cancers.</title>
        <authorList>
            <person name="Li H."/>
            <person name="Myeroff L."/>
            <person name="Smiraglia D."/>
            <person name="Romero M.F."/>
            <person name="Pretlow T.P."/>
            <person name="Kasturi L."/>
            <person name="Lutterbaugh J."/>
            <person name="Rerko R.M."/>
            <person name="Casey G."/>
            <person name="Issa J.-P."/>
            <person name="Willis J."/>
            <person name="Willson J.K."/>
            <person name="Plass C."/>
            <person name="Markowitz S.D."/>
        </authorList>
    </citation>
    <scope>NUCLEOTIDE SEQUENCE [GENOMIC DNA / MRNA]</scope>
    <scope>VARIANT ILE-193</scope>
    <scope>FUNCTION</scope>
    <scope>INDUCTION</scope>
    <scope>TISSUE SPECIFICITY</scope>
    <source>
        <tissue evidence="4">Colon</tissue>
    </source>
</reference>
<reference evidence="22" key="3">
    <citation type="journal article" date="2004" name="J. Biol. Chem.">
        <title>Functional identification of SLC5A8, a tumor suppressor down-regulated in colon cancer, as a Na(+)-coupled transporter for short-chain fatty acids.</title>
        <authorList>
            <person name="Miyauchi S."/>
            <person name="Gopal E."/>
            <person name="Fei Y.-J."/>
            <person name="Ganapathy V."/>
        </authorList>
    </citation>
    <scope>NUCLEOTIDE SEQUENCE [MRNA]</scope>
    <scope>FUNCTION</scope>
    <scope>TISSUE SPECIFICITY</scope>
    <scope>STOICHIOMETRY</scope>
    <scope>VARIANTS ILE-193 AND VAL-251</scope>
    <scope>TRANSPORTER ACTIVITY</scope>
    <source>
        <tissue evidence="5">Intestine</tissue>
    </source>
</reference>
<reference evidence="22" key="4">
    <citation type="journal article" date="2004" name="J. Physiol. (Lond.)">
        <title>The human tumour suppressor gene SLC5A8 expresses a Na+-monocarboxylate cotransporter.</title>
        <authorList>
            <person name="Coady M.J."/>
            <person name="Chang M.-H."/>
            <person name="Charron F.M."/>
            <person name="Plata C."/>
            <person name="Wallendorff B."/>
            <person name="Sah J.F."/>
            <person name="Markowitz S.D."/>
            <person name="Romero M.F."/>
            <person name="Lapointe J.-Y."/>
        </authorList>
    </citation>
    <scope>NUCLEOTIDE SEQUENCE [MRNA]</scope>
    <scope>FUNCTION</scope>
    <scope>TISSUE SPECIFICITY</scope>
    <scope>STOICHIOMETRY</scope>
    <scope>ACTIVITY REGULATION</scope>
    <scope>TRANSPORTER ACTIVITY</scope>
    <source>
        <tissue evidence="7">Kidney cortex</tissue>
    </source>
</reference>
<reference key="5">
    <citation type="journal article" date="2006" name="Nature">
        <title>The finished DNA sequence of human chromosome 12.</title>
        <authorList>
            <person name="Scherer S.E."/>
            <person name="Muzny D.M."/>
            <person name="Buhay C.J."/>
            <person name="Chen R."/>
            <person name="Cree A."/>
            <person name="Ding Y."/>
            <person name="Dugan-Rocha S."/>
            <person name="Gill R."/>
            <person name="Gunaratne P."/>
            <person name="Harris R.A."/>
            <person name="Hawes A.C."/>
            <person name="Hernandez J."/>
            <person name="Hodgson A.V."/>
            <person name="Hume J."/>
            <person name="Jackson A."/>
            <person name="Khan Z.M."/>
            <person name="Kovar-Smith C."/>
            <person name="Lewis L.R."/>
            <person name="Lozado R.J."/>
            <person name="Metzker M.L."/>
            <person name="Milosavljevic A."/>
            <person name="Miner G.R."/>
            <person name="Montgomery K.T."/>
            <person name="Morgan M.B."/>
            <person name="Nazareth L.V."/>
            <person name="Scott G."/>
            <person name="Sodergren E."/>
            <person name="Song X.-Z."/>
            <person name="Steffen D."/>
            <person name="Lovering R.C."/>
            <person name="Wheeler D.A."/>
            <person name="Worley K.C."/>
            <person name="Yuan Y."/>
            <person name="Zhang Z."/>
            <person name="Adams C.Q."/>
            <person name="Ansari-Lari M.A."/>
            <person name="Ayele M."/>
            <person name="Brown M.J."/>
            <person name="Chen G."/>
            <person name="Chen Z."/>
            <person name="Clerc-Blankenburg K.P."/>
            <person name="Davis C."/>
            <person name="Delgado O."/>
            <person name="Dinh H.H."/>
            <person name="Draper H."/>
            <person name="Gonzalez-Garay M.L."/>
            <person name="Havlak P."/>
            <person name="Jackson L.R."/>
            <person name="Jacob L.S."/>
            <person name="Kelly S.H."/>
            <person name="Li L."/>
            <person name="Li Z."/>
            <person name="Liu J."/>
            <person name="Liu W."/>
            <person name="Lu J."/>
            <person name="Maheshwari M."/>
            <person name="Nguyen B.-V."/>
            <person name="Okwuonu G.O."/>
            <person name="Pasternak S."/>
            <person name="Perez L.M."/>
            <person name="Plopper F.J.H."/>
            <person name="Santibanez J."/>
            <person name="Shen H."/>
            <person name="Tabor P.E."/>
            <person name="Verduzco D."/>
            <person name="Waldron L."/>
            <person name="Wang Q."/>
            <person name="Williams G.A."/>
            <person name="Zhang J."/>
            <person name="Zhou J."/>
            <person name="Allen C.C."/>
            <person name="Amin A.G."/>
            <person name="Anyalebechi V."/>
            <person name="Bailey M."/>
            <person name="Barbaria J.A."/>
            <person name="Bimage K.E."/>
            <person name="Bryant N.P."/>
            <person name="Burch P.E."/>
            <person name="Burkett C.E."/>
            <person name="Burrell K.L."/>
            <person name="Calderon E."/>
            <person name="Cardenas V."/>
            <person name="Carter K."/>
            <person name="Casias K."/>
            <person name="Cavazos I."/>
            <person name="Cavazos S.R."/>
            <person name="Ceasar H."/>
            <person name="Chacko J."/>
            <person name="Chan S.N."/>
            <person name="Chavez D."/>
            <person name="Christopoulos C."/>
            <person name="Chu J."/>
            <person name="Cockrell R."/>
            <person name="Cox C.D."/>
            <person name="Dang M."/>
            <person name="Dathorne S.R."/>
            <person name="David R."/>
            <person name="Davis C.M."/>
            <person name="Davy-Carroll L."/>
            <person name="Deshazo D.R."/>
            <person name="Donlin J.E."/>
            <person name="D'Souza L."/>
            <person name="Eaves K.A."/>
            <person name="Egan A."/>
            <person name="Emery-Cohen A.J."/>
            <person name="Escotto M."/>
            <person name="Flagg N."/>
            <person name="Forbes L.D."/>
            <person name="Gabisi A.M."/>
            <person name="Garza M."/>
            <person name="Hamilton C."/>
            <person name="Henderson N."/>
            <person name="Hernandez O."/>
            <person name="Hines S."/>
            <person name="Hogues M.E."/>
            <person name="Huang M."/>
            <person name="Idlebird D.G."/>
            <person name="Johnson R."/>
            <person name="Jolivet A."/>
            <person name="Jones S."/>
            <person name="Kagan R."/>
            <person name="King L.M."/>
            <person name="Leal B."/>
            <person name="Lebow H."/>
            <person name="Lee S."/>
            <person name="LeVan J.M."/>
            <person name="Lewis L.C."/>
            <person name="London P."/>
            <person name="Lorensuhewa L.M."/>
            <person name="Loulseged H."/>
            <person name="Lovett D.A."/>
            <person name="Lucier A."/>
            <person name="Lucier R.L."/>
            <person name="Ma J."/>
            <person name="Madu R.C."/>
            <person name="Mapua P."/>
            <person name="Martindale A.D."/>
            <person name="Martinez E."/>
            <person name="Massey E."/>
            <person name="Mawhiney S."/>
            <person name="Meador M.G."/>
            <person name="Mendez S."/>
            <person name="Mercado C."/>
            <person name="Mercado I.C."/>
            <person name="Merritt C.E."/>
            <person name="Miner Z.L."/>
            <person name="Minja E."/>
            <person name="Mitchell T."/>
            <person name="Mohabbat F."/>
            <person name="Mohabbat K."/>
            <person name="Montgomery B."/>
            <person name="Moore N."/>
            <person name="Morris S."/>
            <person name="Munidasa M."/>
            <person name="Ngo R.N."/>
            <person name="Nguyen N.B."/>
            <person name="Nickerson E."/>
            <person name="Nwaokelemeh O.O."/>
            <person name="Nwokenkwo S."/>
            <person name="Obregon M."/>
            <person name="Oguh M."/>
            <person name="Oragunye N."/>
            <person name="Oviedo R.J."/>
            <person name="Parish B.J."/>
            <person name="Parker D.N."/>
            <person name="Parrish J."/>
            <person name="Parks K.L."/>
            <person name="Paul H.A."/>
            <person name="Payton B.A."/>
            <person name="Perez A."/>
            <person name="Perrin W."/>
            <person name="Pickens A."/>
            <person name="Primus E.L."/>
            <person name="Pu L.-L."/>
            <person name="Puazo M."/>
            <person name="Quiles M.M."/>
            <person name="Quiroz J.B."/>
            <person name="Rabata D."/>
            <person name="Reeves K."/>
            <person name="Ruiz S.J."/>
            <person name="Shao H."/>
            <person name="Sisson I."/>
            <person name="Sonaike T."/>
            <person name="Sorelle R.P."/>
            <person name="Sutton A.E."/>
            <person name="Svatek A.F."/>
            <person name="Svetz L.A."/>
            <person name="Tamerisa K.S."/>
            <person name="Taylor T.R."/>
            <person name="Teague B."/>
            <person name="Thomas N."/>
            <person name="Thorn R.D."/>
            <person name="Trejos Z.Y."/>
            <person name="Trevino B.K."/>
            <person name="Ukegbu O.N."/>
            <person name="Urban J.B."/>
            <person name="Vasquez L.I."/>
            <person name="Vera V.A."/>
            <person name="Villasana D.M."/>
            <person name="Wang L."/>
            <person name="Ward-Moore S."/>
            <person name="Warren J.T."/>
            <person name="Wei X."/>
            <person name="White F."/>
            <person name="Williamson A.L."/>
            <person name="Wleczyk R."/>
            <person name="Wooden H.S."/>
            <person name="Wooden S.H."/>
            <person name="Yen J."/>
            <person name="Yoon L."/>
            <person name="Yoon V."/>
            <person name="Zorrilla S.E."/>
            <person name="Nelson D."/>
            <person name="Kucherlapati R."/>
            <person name="Weinstock G."/>
            <person name="Gibbs R.A."/>
        </authorList>
    </citation>
    <scope>NUCLEOTIDE SEQUENCE [LARGE SCALE GENOMIC DNA]</scope>
</reference>
<reference evidence="26" key="6">
    <citation type="submission" date="2005-07" db="EMBL/GenBank/DDBJ databases">
        <authorList>
            <person name="Mural R.J."/>
            <person name="Istrail S."/>
            <person name="Sutton G.G."/>
            <person name="Florea L."/>
            <person name="Halpern A.L."/>
            <person name="Mobarry C.M."/>
            <person name="Lippert R."/>
            <person name="Walenz B."/>
            <person name="Shatkay H."/>
            <person name="Dew I."/>
            <person name="Miller J.R."/>
            <person name="Flanigan M.J."/>
            <person name="Edwards N.J."/>
            <person name="Bolanos R."/>
            <person name="Fasulo D."/>
            <person name="Halldorsson B.V."/>
            <person name="Hannenhalli S."/>
            <person name="Turner R."/>
            <person name="Yooseph S."/>
            <person name="Lu F."/>
            <person name="Nusskern D.R."/>
            <person name="Shue B.C."/>
            <person name="Zheng X.H."/>
            <person name="Zhong F."/>
            <person name="Delcher A.L."/>
            <person name="Huson D.H."/>
            <person name="Kravitz S.A."/>
            <person name="Mouchard L."/>
            <person name="Reinert K."/>
            <person name="Remington K.A."/>
            <person name="Clark A.G."/>
            <person name="Waterman M.S."/>
            <person name="Eichler E.E."/>
            <person name="Adams M.D."/>
            <person name="Hunkapiller M.W."/>
            <person name="Myers E.W."/>
            <person name="Venter J.C."/>
        </authorList>
    </citation>
    <scope>NUCLEOTIDE SEQUENCE [LARGE SCALE GENOMIC DNA]</scope>
</reference>
<reference evidence="23" key="7">
    <citation type="journal article" date="2004" name="Genome Res.">
        <title>The status, quality, and expansion of the NIH full-length cDNA project: the Mammalian Gene Collection (MGC).</title>
        <authorList>
            <consortium name="The MGC Project Team"/>
        </authorList>
    </citation>
    <scope>NUCLEOTIDE SEQUENCE [LARGE SCALE MRNA]</scope>
</reference>
<reference evidence="22" key="8">
    <citation type="journal article" date="2004" name="J. Clin. Endocrinol. Metab.">
        <title>Expression of the apical iodide transporter in human thyroid tissues: a comparison study with other iodide transporters.</title>
        <authorList>
            <person name="Lacroix L."/>
            <person name="Pourcher T."/>
            <person name="Magnon C."/>
            <person name="Bellon N."/>
            <person name="Talbot M."/>
            <person name="Intaraphairot T."/>
            <person name="Caillou B."/>
            <person name="Schlumberger M."/>
            <person name="Bidart J.-M."/>
        </authorList>
    </citation>
    <scope>SUBCELLULAR LOCATION</scope>
    <scope>TISSUE SPECIFICITY</scope>
</reference>
<reference evidence="22" key="9">
    <citation type="journal article" date="2004" name="Tumor Biol.">
        <title>Aberrant methylation and histone deacetylation associated with silencing of SLC5A8 in gastric cancer.</title>
        <authorList>
            <person name="Ueno M."/>
            <person name="Toyota M."/>
            <person name="Akino K."/>
            <person name="Suzuki H."/>
            <person name="Kusano M."/>
            <person name="Satoh A."/>
            <person name="Mita H."/>
            <person name="Sasaki Y."/>
            <person name="Nojima M."/>
            <person name="Yanagihara K."/>
            <person name="Hinoda Y."/>
            <person name="Tokino T."/>
            <person name="Imai K."/>
        </authorList>
    </citation>
    <scope>TISSUE SPECIFICITY</scope>
    <scope>INDUCTION</scope>
</reference>
<reference evidence="22" key="10">
    <citation type="journal article" date="2005" name="Cancer Res.">
        <title>Shared epigenetic mechanisms in human and mouse gliomas inactivate expression of the growth suppressor SLC5A8.</title>
        <authorList>
            <person name="Hong C."/>
            <person name="Maunakea A."/>
            <person name="Jun P."/>
            <person name="Bollen A.W."/>
            <person name="Hodgson J.G."/>
            <person name="Goldenberg D.D."/>
            <person name="Weiss W.A."/>
            <person name="Costello J.F."/>
        </authorList>
    </citation>
    <scope>FUNCTION</scope>
    <scope>TISSUE SPECIFICITY</scope>
    <scope>INDUCTION</scope>
</reference>
<reference evidence="22" key="11">
    <citation type="journal article" date="2006" name="Cancer Res.">
        <title>SLC5A8 triggers tumor cell apoptosis through pyruvate-dependent inhibition of histone deacetylases.</title>
        <authorList>
            <person name="Thangaraju M."/>
            <person name="Gopal E."/>
            <person name="Martin P.M."/>
            <person name="Ananth S."/>
            <person name="Smith S.B."/>
            <person name="Prasad P.D."/>
            <person name="Sterneck E."/>
            <person name="Ganapathy V."/>
        </authorList>
    </citation>
    <scope>FUNCTION</scope>
    <scope>TISSUE SPECIFICITY</scope>
    <scope>TRANSPORTER ACTIVITY</scope>
</reference>
<reference evidence="22" key="12">
    <citation type="journal article" date="2006" name="J. Neurochem.">
        <title>Identity of SMCT1 (SLC5A8) as a neuron-specific Na+-coupled transporter for active uptake of L-lactate and ketone bodies in the brain.</title>
        <authorList>
            <person name="Martin P.M."/>
            <person name="Gopal E."/>
            <person name="Ananth S."/>
            <person name="Zhuang L."/>
            <person name="Itagaki S."/>
            <person name="Prasad B.M."/>
            <person name="Smith S.B."/>
            <person name="Prasad P.D."/>
            <person name="Ganapathy V."/>
        </authorList>
    </citation>
    <scope>FUNCTION</scope>
    <scope>BIOPHYSICOCHEMICAL PROPERTIES</scope>
    <scope>TRANSPORTER ACTIVITY</scope>
</reference>
<reference evidence="22" key="13">
    <citation type="journal article" date="2006" name="Pharm. Res.">
        <title>Interaction of ibuprofen and other structurally related NSAIDs with the sodium-coupled monocarboxylate transporter SMCT1 (SLC5A8).</title>
        <authorList>
            <person name="Itagaki S."/>
            <person name="Gopal E."/>
            <person name="Zhuang L."/>
            <person name="Fei Y.-J."/>
            <person name="Miyauchi S."/>
            <person name="Prasad P.D."/>
            <person name="Ganapathy V."/>
        </authorList>
    </citation>
    <scope>FUNCTION</scope>
    <scope>ACTIVITY REGULATION</scope>
    <scope>TRANSPORTER ACTIVITY</scope>
</reference>
<reference key="14">
    <citation type="journal article" date="2007" name="Biophys. J.">
        <title>Establishing a definitive stoichiometry for the Na+/monocarboxylate cotransporter SMCT1.</title>
        <authorList>
            <person name="Coady M.J."/>
            <person name="Wallendorff B."/>
            <person name="Bourgeois F."/>
            <person name="Charron F."/>
            <person name="Lapointe J.Y."/>
        </authorList>
    </citation>
    <scope>FUNCTION</scope>
    <scope>TRANSPORTER ACTIVITY</scope>
    <scope>STOICHIOMETRY</scope>
</reference>
<reference evidence="22" key="15">
    <citation type="journal article" date="2007" name="Cancer Detect. Prev.">
        <title>Candidate tumor suppressor gene SLC5A8 is frequently down-regulated by promoter hypermethylation in prostate tumor.</title>
        <authorList>
            <person name="Park J.Y."/>
            <person name="Zheng W."/>
            <person name="Kim D."/>
            <person name="Cheng J.Q."/>
            <person name="Kumar N."/>
            <person name="Ahmad N."/>
            <person name="Pow-Sang J."/>
        </authorList>
    </citation>
    <scope>FUNCTION</scope>
    <scope>TISSUE SPECIFICITY</scope>
    <scope>INDUCTION</scope>
</reference>
<reference evidence="22" key="16">
    <citation type="journal article" date="2007" name="Pharm. Res.">
        <title>Transport of nicotinate and structurally related compounds by human SMCT1 (SLC5A8) and its relevance to drug transport in the mammalian intestinal tract.</title>
        <authorList>
            <person name="Gopal E."/>
            <person name="Miyauchi S."/>
            <person name="Martin P.M."/>
            <person name="Ananth S."/>
            <person name="Roon P."/>
            <person name="Smith S.B."/>
            <person name="Ganapathy V."/>
        </authorList>
    </citation>
    <scope>FUNCTION</scope>
    <scope>STOICHIOMETRY</scope>
    <scope>SUBCELLULAR LOCATION</scope>
    <scope>TISSUE SPECIFICITY</scope>
    <scope>TRANSPORTER ACTIVITY</scope>
</reference>
<reference key="17">
    <citation type="journal article" date="2010" name="Am. J. Physiol.">
        <title>Anionic leak currents through the Na+/monocarboxylate cotransporter SMCT1.</title>
        <authorList>
            <person name="Coady M.J."/>
            <person name="Wallendorff B."/>
            <person name="Bourgeois F."/>
            <person name="Lapointe J.Y."/>
        </authorList>
    </citation>
    <scope>FUNCTION</scope>
    <scope>TRANSPORTER ACTIVITY</scope>
</reference>
<reference key="18">
    <citation type="journal article" date="2010" name="Biochim. Biophys. Acta">
        <title>Sodium-coupled electrogenic transport of pyroglutamate (5-oxoproline) via SLC5A8, a monocarboxylate transporter.</title>
        <authorList>
            <person name="Miyauchi S."/>
            <person name="Gopal E."/>
            <person name="Babu E."/>
            <person name="Srinivas S.R."/>
            <person name="Kubo Y."/>
            <person name="Umapathy N.S."/>
            <person name="Thakkar S.V."/>
            <person name="Ganapathy V."/>
            <person name="Prasad P.D."/>
        </authorList>
    </citation>
    <scope>FUNCTION</scope>
    <scope>TRANSPORTER ACTIVITY</scope>
    <scope>BIOPHYSICOCHEMICAL PROPERTIES</scope>
</reference>
<reference key="19">
    <citation type="journal article" date="2019" name="J. Physiol. Sci.">
        <title>Identification of the multivalent PDZ protein PDZK1 as a binding partner of sodium-coupled monocarboxylate transporter SMCT1 (SLC5A8) and SMCT2 (SLC5A12).</title>
        <authorList>
            <person name="Srivastava S."/>
            <person name="Nakagawa K."/>
            <person name="He X."/>
            <person name="Kimura T."/>
            <person name="Fukutomi T."/>
            <person name="Miyauchi S."/>
            <person name="Sakurai H."/>
            <person name="Anzai N."/>
        </authorList>
    </citation>
    <scope>FUNCTION</scope>
    <scope>TRANSPORTER ACTIVITY</scope>
    <scope>INTERACTION WITH PDKZ1</scope>
    <scope>MUTAGENESIS OF THR-608 AND LEU-610</scope>
</reference>
<protein>
    <recommendedName>
        <fullName>Sodium-coupled monocarboxylate transporter 1</fullName>
    </recommendedName>
    <alternativeName>
        <fullName>Apical iodide transporter</fullName>
    </alternativeName>
    <alternativeName>
        <fullName>Electrogenic sodium monocarboxylate cotransporter</fullName>
    </alternativeName>
    <alternativeName>
        <fullName>Sodium iodide-related cotransporter</fullName>
    </alternativeName>
    <alternativeName>
        <fullName>Solute carrier family 5 member 8</fullName>
    </alternativeName>
</protein>
<gene>
    <name evidence="25" type="primary">SLC5A8</name>
    <name evidence="24" type="synonym">AIT</name>
    <name evidence="19 20" type="synonym">SMCT</name>
    <name evidence="21" type="synonym">SMCT1</name>
</gene>
<name>SC5A8_HUMAN</name>
<organism>
    <name type="scientific">Homo sapiens</name>
    <name type="common">Human</name>
    <dbReference type="NCBI Taxonomy" id="9606"/>
    <lineage>
        <taxon>Eukaryota</taxon>
        <taxon>Metazoa</taxon>
        <taxon>Chordata</taxon>
        <taxon>Craniata</taxon>
        <taxon>Vertebrata</taxon>
        <taxon>Euteleostomi</taxon>
        <taxon>Mammalia</taxon>
        <taxon>Eutheria</taxon>
        <taxon>Euarchontoglires</taxon>
        <taxon>Primates</taxon>
        <taxon>Haplorrhini</taxon>
        <taxon>Catarrhini</taxon>
        <taxon>Hominidae</taxon>
        <taxon>Homo</taxon>
    </lineage>
</organism>
<keyword id="KW-0002">3D-structure</keyword>
<keyword id="KW-0053">Apoptosis</keyword>
<keyword id="KW-1003">Cell membrane</keyword>
<keyword id="KW-0325">Glycoprotein</keyword>
<keyword id="KW-0406">Ion transport</keyword>
<keyword id="KW-0472">Membrane</keyword>
<keyword id="KW-1267">Proteomics identification</keyword>
<keyword id="KW-1185">Reference proteome</keyword>
<keyword id="KW-0915">Sodium</keyword>
<keyword id="KW-0739">Sodium transport</keyword>
<keyword id="KW-0769">Symport</keyword>
<keyword id="KW-0812">Transmembrane</keyword>
<keyword id="KW-1133">Transmembrane helix</keyword>
<keyword id="KW-0813">Transport</keyword>
<keyword id="KW-0043">Tumor suppressor</keyword>
<proteinExistence type="evidence at protein level"/>
<dbReference type="EMBL" id="AY081220">
    <property type="protein sequence ID" value="AAL88746.1"/>
    <property type="molecule type" value="mRNA"/>
</dbReference>
<dbReference type="EMBL" id="AF536216">
    <property type="protein sequence ID" value="AAP46193.1"/>
    <property type="molecule type" value="mRNA"/>
</dbReference>
<dbReference type="EMBL" id="AF536217">
    <property type="protein sequence ID" value="AAP46194.1"/>
    <property type="molecule type" value="Genomic_DNA"/>
</dbReference>
<dbReference type="EMBL" id="AC079953">
    <property type="status" value="NOT_ANNOTATED_CDS"/>
    <property type="molecule type" value="Genomic_DNA"/>
</dbReference>
<dbReference type="EMBL" id="CH471054">
    <property type="protein sequence ID" value="EAW97649.1"/>
    <property type="molecule type" value="Genomic_DNA"/>
</dbReference>
<dbReference type="EMBL" id="BC110492">
    <property type="protein sequence ID" value="AAI10493.1"/>
    <property type="molecule type" value="mRNA"/>
</dbReference>
<dbReference type="CCDS" id="CCDS9080.1"/>
<dbReference type="RefSeq" id="NP_666018.3">
    <property type="nucleotide sequence ID" value="NM_145913.3"/>
</dbReference>
<dbReference type="PDB" id="7SL9">
    <property type="method" value="EM"/>
    <property type="resolution" value="3.50 A"/>
    <property type="chains" value="A=1-610"/>
</dbReference>
<dbReference type="PDBsum" id="7SL9"/>
<dbReference type="EMDB" id="EMD-25195"/>
<dbReference type="SMR" id="Q8N695"/>
<dbReference type="BioGRID" id="127763">
    <property type="interactions" value="30"/>
</dbReference>
<dbReference type="FunCoup" id="Q8N695">
    <property type="interactions" value="52"/>
</dbReference>
<dbReference type="IntAct" id="Q8N695">
    <property type="interactions" value="24"/>
</dbReference>
<dbReference type="STRING" id="9606.ENSP00000445340"/>
<dbReference type="DrugBank" id="DB01762">
    <property type="generic name" value="Acetoacetic acid"/>
</dbReference>
<dbReference type="DrugBank" id="DB00121">
    <property type="generic name" value="Biotin"/>
</dbReference>
<dbReference type="DrugBank" id="DB08872">
    <property type="generic name" value="Gabapentin enacarbil"/>
</dbReference>
<dbReference type="DrugBank" id="DB08949">
    <property type="generic name" value="Inositol nicotinate"/>
</dbReference>
<dbReference type="DrugBank" id="DB00627">
    <property type="generic name" value="Niacin"/>
</dbReference>
<dbReference type="DrugCentral" id="Q8N695"/>
<dbReference type="GuidetoPHARMACOLOGY" id="922"/>
<dbReference type="TCDB" id="2.A.21.5.3">
    <property type="family name" value="the solute:sodium symporter (sss) family"/>
</dbReference>
<dbReference type="GlyCosmos" id="Q8N695">
    <property type="glycosylation" value="4 sites, 3 glycans"/>
</dbReference>
<dbReference type="GlyGen" id="Q8N695">
    <property type="glycosylation" value="4 sites, 3 O-linked glycans (3 sites)"/>
</dbReference>
<dbReference type="iPTMnet" id="Q8N695"/>
<dbReference type="PhosphoSitePlus" id="Q8N695"/>
<dbReference type="BioMuta" id="SLC5A8"/>
<dbReference type="DMDM" id="296452898"/>
<dbReference type="jPOST" id="Q8N695"/>
<dbReference type="MassIVE" id="Q8N695"/>
<dbReference type="PaxDb" id="9606-ENSP00000445340"/>
<dbReference type="PeptideAtlas" id="Q8N695"/>
<dbReference type="ProteomicsDB" id="72147"/>
<dbReference type="Antibodypedia" id="51376">
    <property type="antibodies" value="178 antibodies from 23 providers"/>
</dbReference>
<dbReference type="DNASU" id="160728"/>
<dbReference type="Ensembl" id="ENST00000536262.3">
    <property type="protein sequence ID" value="ENSP00000445340.2"/>
    <property type="gene ID" value="ENSG00000256870.3"/>
</dbReference>
<dbReference type="Ensembl" id="ENST00000572861.3">
    <property type="protein sequence ID" value="ENSP00000461697.2"/>
    <property type="gene ID" value="ENSG00000262217.3"/>
</dbReference>
<dbReference type="GeneID" id="160728"/>
<dbReference type="KEGG" id="hsa:160728"/>
<dbReference type="MANE-Select" id="ENST00000536262.3">
    <property type="protein sequence ID" value="ENSP00000445340.2"/>
    <property type="RefSeq nucleotide sequence ID" value="NM_145913.5"/>
    <property type="RefSeq protein sequence ID" value="NP_666018.3"/>
</dbReference>
<dbReference type="UCSC" id="uc001thz.5">
    <property type="organism name" value="human"/>
</dbReference>
<dbReference type="AGR" id="HGNC:19119"/>
<dbReference type="CTD" id="160728"/>
<dbReference type="DisGeNET" id="160728"/>
<dbReference type="GeneCards" id="SLC5A8"/>
<dbReference type="HGNC" id="HGNC:19119">
    <property type="gene designation" value="SLC5A8"/>
</dbReference>
<dbReference type="HPA" id="ENSG00000256870">
    <property type="expression patterns" value="Group enriched (cervix, kidney, thyroid gland)"/>
</dbReference>
<dbReference type="MIM" id="608044">
    <property type="type" value="gene"/>
</dbReference>
<dbReference type="neXtProt" id="NX_Q8N695"/>
<dbReference type="OpenTargets" id="ENSG00000256870"/>
<dbReference type="PharmGKB" id="PA134989874"/>
<dbReference type="VEuPathDB" id="HostDB:ENSG00000256870"/>
<dbReference type="eggNOG" id="KOG2349">
    <property type="taxonomic scope" value="Eukaryota"/>
</dbReference>
<dbReference type="GeneTree" id="ENSGT00940000155166"/>
<dbReference type="HOGENOM" id="CLU_018808_11_1_1"/>
<dbReference type="InParanoid" id="Q8N695"/>
<dbReference type="OMA" id="VFVFYQF"/>
<dbReference type="OrthoDB" id="6132759at2759"/>
<dbReference type="PAN-GO" id="Q8N695">
    <property type="GO annotations" value="3 GO annotations based on evolutionary models"/>
</dbReference>
<dbReference type="PhylomeDB" id="Q8N695"/>
<dbReference type="TreeFam" id="TF316728"/>
<dbReference type="PathwayCommons" id="Q8N695"/>
<dbReference type="Reactome" id="R-HSA-197264">
    <property type="pathway name" value="Nicotinamide salvaging"/>
</dbReference>
<dbReference type="Reactome" id="R-HSA-428643">
    <property type="pathway name" value="Organic anion transporters"/>
</dbReference>
<dbReference type="SABIO-RK" id="Q8N695"/>
<dbReference type="SignaLink" id="Q8N695"/>
<dbReference type="SIGNOR" id="Q8N695"/>
<dbReference type="BioGRID-ORCS" id="160728">
    <property type="hits" value="13 hits in 1139 CRISPR screens"/>
</dbReference>
<dbReference type="ChiTaRS" id="SLC5A8">
    <property type="organism name" value="human"/>
</dbReference>
<dbReference type="GeneWiki" id="SLC5A8"/>
<dbReference type="GenomeRNAi" id="160728"/>
<dbReference type="Pharos" id="Q8N695">
    <property type="development level" value="Tchem"/>
</dbReference>
<dbReference type="PRO" id="PR:Q8N695"/>
<dbReference type="Proteomes" id="UP000005640">
    <property type="component" value="Chromosome 12"/>
</dbReference>
<dbReference type="RNAct" id="Q8N695">
    <property type="molecule type" value="protein"/>
</dbReference>
<dbReference type="Bgee" id="ENSG00000256870">
    <property type="expression patterns" value="Expressed in olfactory segment of nasal mucosa and 49 other cell types or tissues"/>
</dbReference>
<dbReference type="GO" id="GO:0016324">
    <property type="term" value="C:apical plasma membrane"/>
    <property type="evidence" value="ECO:0000314"/>
    <property type="project" value="UniProtKB"/>
</dbReference>
<dbReference type="GO" id="GO:0070062">
    <property type="term" value="C:extracellular exosome"/>
    <property type="evidence" value="ECO:0007005"/>
    <property type="project" value="UniProtKB"/>
</dbReference>
<dbReference type="GO" id="GO:0000811">
    <property type="term" value="C:GINS complex"/>
    <property type="evidence" value="ECO:0007669"/>
    <property type="project" value="Ensembl"/>
</dbReference>
<dbReference type="GO" id="GO:0005886">
    <property type="term" value="C:plasma membrane"/>
    <property type="evidence" value="ECO:0000304"/>
    <property type="project" value="Reactome"/>
</dbReference>
<dbReference type="GO" id="GO:0160081">
    <property type="term" value="F:iodide channel activity"/>
    <property type="evidence" value="ECO:0000304"/>
    <property type="project" value="Reactome"/>
</dbReference>
<dbReference type="GO" id="GO:0015129">
    <property type="term" value="F:lactate transmembrane transporter activity"/>
    <property type="evidence" value="ECO:0007669"/>
    <property type="project" value="Ensembl"/>
</dbReference>
<dbReference type="GO" id="GO:0140161">
    <property type="term" value="F:monocarboxylate:sodium symporter activity"/>
    <property type="evidence" value="ECO:0000314"/>
    <property type="project" value="UniProtKB"/>
</dbReference>
<dbReference type="GO" id="GO:0008028">
    <property type="term" value="F:monocarboxylic acid transmembrane transporter activity"/>
    <property type="evidence" value="ECO:0000304"/>
    <property type="project" value="Reactome"/>
</dbReference>
<dbReference type="GO" id="GO:0005343">
    <property type="term" value="F:organic acid:sodium symporter activity"/>
    <property type="evidence" value="ECO:0000318"/>
    <property type="project" value="GO_Central"/>
</dbReference>
<dbReference type="GO" id="GO:0015552">
    <property type="term" value="F:propionate transmembrane transporter activity"/>
    <property type="evidence" value="ECO:0007669"/>
    <property type="project" value="Ensembl"/>
</dbReference>
<dbReference type="GO" id="GO:0006846">
    <property type="term" value="P:acetate transport"/>
    <property type="evidence" value="ECO:0000314"/>
    <property type="project" value="UniProtKB"/>
</dbReference>
<dbReference type="GO" id="GO:0006915">
    <property type="term" value="P:apoptotic process"/>
    <property type="evidence" value="ECO:0007669"/>
    <property type="project" value="UniProtKB-KW"/>
</dbReference>
<dbReference type="GO" id="GO:0006821">
    <property type="term" value="P:chloride transport"/>
    <property type="evidence" value="ECO:0000314"/>
    <property type="project" value="UniProtKB"/>
</dbReference>
<dbReference type="GO" id="GO:0015705">
    <property type="term" value="P:iodide transport"/>
    <property type="evidence" value="ECO:0000314"/>
    <property type="project" value="UniProtKB"/>
</dbReference>
<dbReference type="GO" id="GO:0015727">
    <property type="term" value="P:lactate transport"/>
    <property type="evidence" value="ECO:0000314"/>
    <property type="project" value="UniProtKB"/>
</dbReference>
<dbReference type="GO" id="GO:0006811">
    <property type="term" value="P:monoatomic ion transport"/>
    <property type="evidence" value="ECO:0000304"/>
    <property type="project" value="Reactome"/>
</dbReference>
<dbReference type="GO" id="GO:2001142">
    <property type="term" value="P:nicotinate transport"/>
    <property type="evidence" value="ECO:0000314"/>
    <property type="project" value="UniProtKB"/>
</dbReference>
<dbReference type="GO" id="GO:0015706">
    <property type="term" value="P:nitrate transmembrane transport"/>
    <property type="evidence" value="ECO:0000314"/>
    <property type="project" value="UniProtKB"/>
</dbReference>
<dbReference type="GO" id="GO:0015730">
    <property type="term" value="P:propanoate transmembrane transport"/>
    <property type="evidence" value="ECO:0000314"/>
    <property type="project" value="UniProtKB"/>
</dbReference>
<dbReference type="GO" id="GO:0006848">
    <property type="term" value="P:pyruvate transport"/>
    <property type="evidence" value="ECO:0000314"/>
    <property type="project" value="UniProtKB"/>
</dbReference>
<dbReference type="GO" id="GO:0006814">
    <property type="term" value="P:sodium ion transport"/>
    <property type="evidence" value="ECO:0000318"/>
    <property type="project" value="GO_Central"/>
</dbReference>
<dbReference type="CDD" id="cd11519">
    <property type="entry name" value="SLC5sbd_SMCT1"/>
    <property type="match status" value="1"/>
</dbReference>
<dbReference type="FunFam" id="1.20.1730.10:FF:000007">
    <property type="entry name" value="Sodium-coupled monocarboxylate transporter 2"/>
    <property type="match status" value="1"/>
</dbReference>
<dbReference type="Gene3D" id="1.20.1730.10">
    <property type="entry name" value="Sodium/glucose cotransporter"/>
    <property type="match status" value="1"/>
</dbReference>
<dbReference type="InterPro" id="IPR038377">
    <property type="entry name" value="Na/Glc_symporter_sf"/>
</dbReference>
<dbReference type="InterPro" id="IPR001734">
    <property type="entry name" value="Na/solute_symporter"/>
</dbReference>
<dbReference type="InterPro" id="IPR041992">
    <property type="entry name" value="SLC5sbd_SMCT1"/>
</dbReference>
<dbReference type="InterPro" id="IPR051163">
    <property type="entry name" value="Sodium:Solute_Symporter_SSF"/>
</dbReference>
<dbReference type="NCBIfam" id="TIGR00813">
    <property type="entry name" value="sss"/>
    <property type="match status" value="1"/>
</dbReference>
<dbReference type="PANTHER" id="PTHR42985">
    <property type="entry name" value="SODIUM-COUPLED MONOCARBOXYLATE TRANSPORTER"/>
    <property type="match status" value="1"/>
</dbReference>
<dbReference type="PANTHER" id="PTHR42985:SF10">
    <property type="entry name" value="SODIUM-COUPLED MONOCARBOXYLATE TRANSPORTER 1"/>
    <property type="match status" value="1"/>
</dbReference>
<dbReference type="Pfam" id="PF00474">
    <property type="entry name" value="SSF"/>
    <property type="match status" value="1"/>
</dbReference>
<dbReference type="PROSITE" id="PS50283">
    <property type="entry name" value="NA_SOLUT_SYMP_3"/>
    <property type="match status" value="1"/>
</dbReference>
<feature type="chain" id="PRO_0000334499" description="Sodium-coupled monocarboxylate transporter 1">
    <location>
        <begin position="1"/>
        <end position="610"/>
    </location>
</feature>
<feature type="topological domain" description="Extracellular" evidence="1">
    <location>
        <begin position="1"/>
        <end position="9"/>
    </location>
</feature>
<feature type="transmembrane region" description="Helical" evidence="1">
    <location>
        <begin position="10"/>
        <end position="30"/>
    </location>
</feature>
<feature type="topological domain" description="Cytoplasmic" evidence="1">
    <location>
        <begin position="31"/>
        <end position="51"/>
    </location>
</feature>
<feature type="transmembrane region" description="Helical" evidence="1">
    <location>
        <begin position="52"/>
        <end position="72"/>
    </location>
</feature>
<feature type="topological domain" description="Extracellular" evidence="1">
    <location>
        <begin position="73"/>
        <end position="83"/>
    </location>
</feature>
<feature type="transmembrane region" description="Helical" evidence="1">
    <location>
        <begin position="84"/>
        <end position="104"/>
    </location>
</feature>
<feature type="topological domain" description="Cytoplasmic" evidence="1">
    <location>
        <begin position="105"/>
        <end position="132"/>
    </location>
</feature>
<feature type="transmembrane region" description="Helical" evidence="1">
    <location>
        <begin position="133"/>
        <end position="153"/>
    </location>
</feature>
<feature type="topological domain" description="Extracellular" evidence="1">
    <location>
        <begin position="154"/>
        <end position="161"/>
    </location>
</feature>
<feature type="transmembrane region" description="Helical" evidence="1">
    <location>
        <begin position="162"/>
        <end position="182"/>
    </location>
</feature>
<feature type="topological domain" description="Cytoplasmic" evidence="1">
    <location>
        <begin position="183"/>
        <end position="189"/>
    </location>
</feature>
<feature type="transmembrane region" description="Helical" evidence="1">
    <location>
        <begin position="190"/>
        <end position="210"/>
    </location>
</feature>
<feature type="topological domain" description="Extracellular" evidence="1">
    <location>
        <begin position="211"/>
        <end position="239"/>
    </location>
</feature>
<feature type="transmembrane region" description="Helical" evidence="1">
    <location>
        <begin position="240"/>
        <end position="260"/>
    </location>
</feature>
<feature type="topological domain" description="Cytoplasmic" evidence="1">
    <location>
        <begin position="261"/>
        <end position="279"/>
    </location>
</feature>
<feature type="transmembrane region" description="Helical" evidence="1">
    <location>
        <begin position="280"/>
        <end position="300"/>
    </location>
</feature>
<feature type="topological domain" description="Extracellular" evidence="1">
    <location>
        <begin position="301"/>
        <end position="336"/>
    </location>
</feature>
<feature type="transmembrane region" description="Helical" evidence="1">
    <location>
        <begin position="337"/>
        <end position="359"/>
    </location>
</feature>
<feature type="topological domain" description="Cytoplasmic" evidence="1">
    <location>
        <begin position="360"/>
        <end position="389"/>
    </location>
</feature>
<feature type="transmembrane region" description="Helical" evidence="1">
    <location>
        <begin position="390"/>
        <end position="410"/>
    </location>
</feature>
<feature type="topological domain" description="Extracellular" evidence="1">
    <location>
        <begin position="411"/>
        <end position="415"/>
    </location>
</feature>
<feature type="transmembrane region" description="Helical" evidence="1">
    <location>
        <begin position="416"/>
        <end position="436"/>
    </location>
</feature>
<feature type="topological domain" description="Cytoplasmic" evidence="1">
    <location>
        <begin position="437"/>
        <end position="439"/>
    </location>
</feature>
<feature type="transmembrane region" description="Helical" evidence="1">
    <location>
        <begin position="440"/>
        <end position="460"/>
    </location>
</feature>
<feature type="topological domain" description="Extracellular" evidence="1">
    <location>
        <begin position="461"/>
        <end position="518"/>
    </location>
</feature>
<feature type="transmembrane region" description="Helical" evidence="1">
    <location>
        <begin position="519"/>
        <end position="539"/>
    </location>
</feature>
<feature type="topological domain" description="Cytoplasmic" evidence="1">
    <location>
        <begin position="540"/>
        <end position="610"/>
    </location>
</feature>
<feature type="region of interest" description="Disordered" evidence="2">
    <location>
        <begin position="585"/>
        <end position="610"/>
    </location>
</feature>
<feature type="short sequence motif" description="PDZ-binding" evidence="18">
    <location>
        <begin position="608"/>
        <end position="610"/>
    </location>
</feature>
<feature type="compositionally biased region" description="Polar residues" evidence="2">
    <location>
        <begin position="596"/>
        <end position="610"/>
    </location>
</feature>
<feature type="glycosylation site" description="N-linked (GlcNAc...) asparagine" evidence="1">
    <location>
        <position position="485"/>
    </location>
</feature>
<feature type="sequence variant" id="VAR_057336" description="In dbSNP:rs1709189." evidence="4 5">
    <original>V</original>
    <variation>I</variation>
    <location>
        <position position="193"/>
    </location>
</feature>
<feature type="sequence variant" id="VAR_057337" description="In dbSNP:rs11834933." evidence="5">
    <original>F</original>
    <variation>V</variation>
    <location>
        <position position="251"/>
    </location>
</feature>
<feature type="mutagenesis site" description="Loss of interaction with PDZK1." evidence="18">
    <original>T</original>
    <variation>A</variation>
    <location>
        <position position="608"/>
    </location>
</feature>
<feature type="mutagenesis site" description="Loss of interaction with PDZK1." evidence="18">
    <original>L</original>
    <variation>A</variation>
    <location>
        <position position="610"/>
    </location>
</feature>
<feature type="sequence conflict" description="In Ref. 1; AAL88746 and 2; AAP46193/AAP46194." evidence="22" ref="1 2">
    <original>M</original>
    <variation>I</variation>
    <location>
        <position position="490"/>
    </location>
</feature>
<feature type="strand" evidence="27">
    <location>
        <begin position="12"/>
        <end position="14"/>
    </location>
</feature>
<feature type="helix" evidence="27">
    <location>
        <begin position="15"/>
        <end position="33"/>
    </location>
</feature>
<feature type="helix" evidence="27">
    <location>
        <begin position="55"/>
        <end position="65"/>
    </location>
</feature>
<feature type="strand" evidence="27">
    <location>
        <begin position="66"/>
        <end position="68"/>
    </location>
</feature>
<feature type="helix" evidence="27">
    <location>
        <begin position="69"/>
        <end position="72"/>
    </location>
</feature>
<feature type="helix" evidence="27">
    <location>
        <begin position="74"/>
        <end position="81"/>
    </location>
</feature>
<feature type="helix" evidence="27">
    <location>
        <begin position="82"/>
        <end position="87"/>
    </location>
</feature>
<feature type="helix" evidence="27">
    <location>
        <begin position="88"/>
        <end position="101"/>
    </location>
</feature>
<feature type="helix" evidence="27">
    <location>
        <begin position="104"/>
        <end position="109"/>
    </location>
</feature>
<feature type="turn" evidence="27">
    <location>
        <begin position="115"/>
        <end position="118"/>
    </location>
</feature>
<feature type="helix" evidence="27">
    <location>
        <begin position="119"/>
        <end position="122"/>
    </location>
</feature>
<feature type="helix" evidence="27">
    <location>
        <begin position="126"/>
        <end position="129"/>
    </location>
</feature>
<feature type="helix" evidence="27">
    <location>
        <begin position="132"/>
        <end position="158"/>
    </location>
</feature>
<feature type="helix" evidence="27">
    <location>
        <begin position="164"/>
        <end position="174"/>
    </location>
</feature>
<feature type="turn" evidence="27">
    <location>
        <begin position="175"/>
        <end position="180"/>
    </location>
</feature>
<feature type="strand" evidence="27">
    <location>
        <begin position="181"/>
        <end position="183"/>
    </location>
</feature>
<feature type="helix" evidence="27">
    <location>
        <begin position="187"/>
        <end position="211"/>
    </location>
</feature>
<feature type="helix" evidence="27">
    <location>
        <begin position="214"/>
        <end position="223"/>
    </location>
</feature>
<feature type="strand" evidence="27">
    <location>
        <begin position="238"/>
        <end position="240"/>
    </location>
</feature>
<feature type="helix" evidence="27">
    <location>
        <begin position="242"/>
        <end position="257"/>
    </location>
</feature>
<feature type="helix" evidence="27">
    <location>
        <begin position="261"/>
        <end position="263"/>
    </location>
</feature>
<feature type="helix" evidence="27">
    <location>
        <begin position="265"/>
        <end position="268"/>
    </location>
</feature>
<feature type="strand" evidence="27">
    <location>
        <begin position="270"/>
        <end position="272"/>
    </location>
</feature>
<feature type="helix" evidence="27">
    <location>
        <begin position="273"/>
        <end position="304"/>
    </location>
</feature>
<feature type="strand" evidence="27">
    <location>
        <begin position="305"/>
        <end position="308"/>
    </location>
</feature>
<feature type="strand" evidence="27">
    <location>
        <begin position="310"/>
        <end position="314"/>
    </location>
</feature>
<feature type="helix" evidence="27">
    <location>
        <begin position="319"/>
        <end position="321"/>
    </location>
</feature>
<feature type="helix" evidence="27">
    <location>
        <begin position="323"/>
        <end position="330"/>
    </location>
</feature>
<feature type="strand" evidence="27">
    <location>
        <begin position="331"/>
        <end position="334"/>
    </location>
</feature>
<feature type="helix" evidence="27">
    <location>
        <begin position="338"/>
        <end position="368"/>
    </location>
</feature>
<feature type="strand" evidence="27">
    <location>
        <begin position="369"/>
        <end position="372"/>
    </location>
</feature>
<feature type="helix" evidence="27">
    <location>
        <begin position="378"/>
        <end position="385"/>
    </location>
</feature>
<feature type="helix" evidence="27">
    <location>
        <begin position="387"/>
        <end position="402"/>
    </location>
</feature>
<feature type="strand" evidence="27">
    <location>
        <begin position="405"/>
        <end position="410"/>
    </location>
</feature>
<feature type="helix" evidence="27">
    <location>
        <begin position="411"/>
        <end position="418"/>
    </location>
</feature>
<feature type="helix" evidence="27">
    <location>
        <begin position="421"/>
        <end position="432"/>
    </location>
</feature>
<feature type="helix" evidence="27">
    <location>
        <begin position="439"/>
        <end position="462"/>
    </location>
</feature>
<feature type="helix" evidence="27">
    <location>
        <begin position="467"/>
        <end position="470"/>
    </location>
</feature>
<feature type="helix" evidence="27">
    <location>
        <begin position="511"/>
        <end position="515"/>
    </location>
</feature>
<feature type="turn" evidence="27">
    <location>
        <begin position="516"/>
        <end position="518"/>
    </location>
</feature>
<feature type="helix" evidence="27">
    <location>
        <begin position="526"/>
        <end position="532"/>
    </location>
</feature>
<feature type="helix" evidence="27">
    <location>
        <begin position="534"/>
        <end position="542"/>
    </location>
</feature>
<evidence type="ECO:0000255" key="1"/>
<evidence type="ECO:0000256" key="2">
    <source>
        <dbReference type="SAM" id="MobiDB-lite"/>
    </source>
</evidence>
<evidence type="ECO:0000269" key="3">
    <source>
    </source>
</evidence>
<evidence type="ECO:0000269" key="4">
    <source>
    </source>
</evidence>
<evidence type="ECO:0000269" key="5">
    <source>
    </source>
</evidence>
<evidence type="ECO:0000269" key="6">
    <source>
    </source>
</evidence>
<evidence type="ECO:0000269" key="7">
    <source>
    </source>
</evidence>
<evidence type="ECO:0000269" key="8">
    <source>
    </source>
</evidence>
<evidence type="ECO:0000269" key="9">
    <source>
    </source>
</evidence>
<evidence type="ECO:0000269" key="10">
    <source>
    </source>
</evidence>
<evidence type="ECO:0000269" key="11">
    <source>
    </source>
</evidence>
<evidence type="ECO:0000269" key="12">
    <source>
    </source>
</evidence>
<evidence type="ECO:0000269" key="13">
    <source>
    </source>
</evidence>
<evidence type="ECO:0000269" key="14">
    <source>
    </source>
</evidence>
<evidence type="ECO:0000269" key="15">
    <source>
    </source>
</evidence>
<evidence type="ECO:0000269" key="16">
    <source>
    </source>
</evidence>
<evidence type="ECO:0000269" key="17">
    <source>
    </source>
</evidence>
<evidence type="ECO:0000269" key="18">
    <source>
    </source>
</evidence>
<evidence type="ECO:0000303" key="19">
    <source>
    </source>
</evidence>
<evidence type="ECO:0000303" key="20">
    <source>
    </source>
</evidence>
<evidence type="ECO:0000303" key="21">
    <source>
    </source>
</evidence>
<evidence type="ECO:0000305" key="22"/>
<evidence type="ECO:0000312" key="23">
    <source>
        <dbReference type="EMBL" id="AAI10493.1"/>
    </source>
</evidence>
<evidence type="ECO:0000312" key="24">
    <source>
        <dbReference type="EMBL" id="AAL88746.1"/>
    </source>
</evidence>
<evidence type="ECO:0000312" key="25">
    <source>
        <dbReference type="EMBL" id="AAP46193.1"/>
    </source>
</evidence>
<evidence type="ECO:0000312" key="26">
    <source>
        <dbReference type="EMBL" id="EAW97649.1"/>
    </source>
</evidence>
<evidence type="ECO:0007829" key="27">
    <source>
        <dbReference type="PDB" id="7SL9"/>
    </source>
</evidence>
<comment type="function">
    <text evidence="3 4 5 7 9 10 11 12 13 14 15 16 17 18">Acts as an electrogenic sodium (Na(+)) and chloride (Cl-)-dependent sodium-coupled solute transporter, including transport of monocarboxylates (short-chain fatty acids including L-lactate, D-lactate, pyruvate, acetate, propionate, valerate and butyrate), mocarboxylate drugs (nicotinate, benzoate, salicylate and 5-aminosalicylate) and ketone bodies (beta-D-hydroxybutyrate, acetoacetate and alpha-ketoisocaproate), with a Na(+):substrate stoichiometry of between 4:1 and 2:1 (PubMed:14966140, PubMed:15090606, PubMed:16729224, PubMed:16805814, PubMed:17178845, PubMed:17245649, PubMed:17526579, PubMed:20211600, PubMed:30604288). Catalyzes passive carrier mediated diffusion of iodide (PubMed:12107270). Mediates iodide transport from the thyrocyte into the colloid lumen through the apical membrane (PubMed:12107270). May be responsible for the absorption of D-lactate and monocarboxylate drugs from the intestinal tract (PubMed:17245649). Acts as a tumor suppressor, suppressing colony formation in colon cancer, prostate cancer and glioma cell lines (PubMed:12829793, PubMed:15867356, PubMed:18037591). May play a critical role in the entry of L-lactate and ketone bodies into neurons by a process driven by an electrochemical Na(+) gradient and hence contribute to the maintenance of the energy status and function of neurons (PubMed:16805814). Mediates sodium-coupled electrogenic transport of pyroglutamate (5-oxo-L-proline) (PubMed:20211600). Can mediate the transport of chloride, bromide, iodide and nitrate ions when the external concentration of sodium ions is reduced (PubMed:19864324).</text>
</comment>
<comment type="catalytic activity">
    <reaction evidence="5 7 11 14">
        <text>(S)-lactate(out) + 2 Na(+)(out) = (S)-lactate(in) + 2 Na(+)(in)</text>
        <dbReference type="Rhea" id="RHEA:72935"/>
        <dbReference type="ChEBI" id="CHEBI:16651"/>
        <dbReference type="ChEBI" id="CHEBI:29101"/>
    </reaction>
</comment>
<comment type="catalytic activity">
    <reaction evidence="5 7 10 14">
        <text>propanoate(out) + 2 Na(+)(out) = propanoate(in) + 2 Na(+)(in)</text>
        <dbReference type="Rhea" id="RHEA:72939"/>
        <dbReference type="ChEBI" id="CHEBI:17272"/>
        <dbReference type="ChEBI" id="CHEBI:29101"/>
    </reaction>
</comment>
<comment type="catalytic activity">
    <reaction evidence="5 7 11 12">
        <text>pyruvate(out) + 2 Na(+)(out) = pyruvate(in) + 2 Na(+)(in)</text>
        <dbReference type="Rhea" id="RHEA:72943"/>
        <dbReference type="ChEBI" id="CHEBI:15361"/>
        <dbReference type="ChEBI" id="CHEBI:29101"/>
    </reaction>
</comment>
<comment type="catalytic activity">
    <reaction evidence="5 7">
        <text>acetate(out) + 2 Na(+)(out) = acetate(in) + 2 Na(+)(in)</text>
        <dbReference type="Rhea" id="RHEA:72947"/>
        <dbReference type="ChEBI" id="CHEBI:29101"/>
        <dbReference type="ChEBI" id="CHEBI:30089"/>
    </reaction>
</comment>
<comment type="catalytic activity">
    <reaction evidence="5">
        <text>butanoate(out) + 2 Na(+)(out) = butanoate(in) + 2 Na(+)(in)</text>
        <dbReference type="Rhea" id="RHEA:72951"/>
        <dbReference type="ChEBI" id="CHEBI:17968"/>
        <dbReference type="ChEBI" id="CHEBI:29101"/>
    </reaction>
</comment>
<comment type="catalytic activity">
    <reaction evidence="5 7 10 12 13 17 18">
        <text>nicotinate(out) + 2 Na(+)(out) = nicotinate(in) + 2 Na(+)(in)</text>
        <dbReference type="Rhea" id="RHEA:72955"/>
        <dbReference type="ChEBI" id="CHEBI:29101"/>
        <dbReference type="ChEBI" id="CHEBI:32544"/>
    </reaction>
</comment>
<comment type="catalytic activity">
    <reaction evidence="11">
        <text>(R)-3-hydroxybutanoate(out) + 2 Na(+)(out) = (R)-3-hydroxybutanoate(in) + 2 Na(+)(in)</text>
        <dbReference type="Rhea" id="RHEA:72959"/>
        <dbReference type="ChEBI" id="CHEBI:10983"/>
        <dbReference type="ChEBI" id="CHEBI:29101"/>
    </reaction>
</comment>
<comment type="catalytic activity">
    <reaction evidence="11">
        <text>acetoacetate(out) + 2 Na(+)(out) = acetoacetate(in) + 2 Na(+)(in)</text>
        <dbReference type="Rhea" id="RHEA:72963"/>
        <dbReference type="ChEBI" id="CHEBI:13705"/>
        <dbReference type="ChEBI" id="CHEBI:29101"/>
    </reaction>
</comment>
<comment type="catalytic activity">
    <reaction evidence="11">
        <text>4-methyl-2-oxopentanoate(out) + 2 Na(+)(out) = 4-methyl-2-oxopentanoate(in) + 2 Na(+)(in)</text>
        <dbReference type="Rhea" id="RHEA:72967"/>
        <dbReference type="ChEBI" id="CHEBI:17865"/>
        <dbReference type="ChEBI" id="CHEBI:29101"/>
    </reaction>
</comment>
<comment type="catalytic activity">
    <reaction evidence="17">
        <text>5-oxo-L-proline(out) + 2 Na(+)(out) = 5-oxo-L-proline(in) + 2 Na(+)(in)</text>
        <dbReference type="Rhea" id="RHEA:72971"/>
        <dbReference type="ChEBI" id="CHEBI:29101"/>
        <dbReference type="ChEBI" id="CHEBI:58402"/>
    </reaction>
</comment>
<comment type="catalytic activity">
    <reaction evidence="3 16">
        <text>iodide(out) = iodide(in)</text>
        <dbReference type="Rhea" id="RHEA:66324"/>
        <dbReference type="ChEBI" id="CHEBI:16382"/>
    </reaction>
</comment>
<comment type="catalytic activity">
    <reaction evidence="16">
        <text>chloride(in) = chloride(out)</text>
        <dbReference type="Rhea" id="RHEA:29823"/>
        <dbReference type="ChEBI" id="CHEBI:17996"/>
    </reaction>
</comment>
<comment type="catalytic activity">
    <reaction evidence="16">
        <text>nitrate(in) = nitrate(out)</text>
        <dbReference type="Rhea" id="RHEA:34923"/>
        <dbReference type="ChEBI" id="CHEBI:17632"/>
    </reaction>
</comment>
<comment type="catalytic activity">
    <reaction evidence="16">
        <text>bromide(in) = bromide(out)</text>
        <dbReference type="Rhea" id="RHEA:75383"/>
        <dbReference type="ChEBI" id="CHEBI:15858"/>
    </reaction>
</comment>
<comment type="activity regulation">
    <text evidence="3 7 10">Increase of iodide influx inhibited by addition of perchlorate (NaClO(4)), a competitive inhibitor of iodide uptake catalyzed by sodium iodide symporter (NIS) (PubMed:12107270). Cotransport of monocarboxylates and nicotinate strongly inhibited by probenecid, nonsteroid anti-inflammatory drugs (ibuprofen, fenoprofen, ketprofen, naproxen) in a Na(+)-dependent manner or by prolonged exposure to external concentrations of monocarboxylates (PubMed:15090606, PubMed:16729224).</text>
</comment>
<comment type="biophysicochemical properties">
    <kinetics>
        <KM evidence="11">1442 uM for beta-D-hydroxybutyate</KM>
        <KM evidence="11">2327 uM for beta-L-hydroxybutyate</KM>
        <KM evidence="11">1088 uM for D-lactate</KM>
        <KM evidence="11">184 uM for L-lactate</KM>
        <KM evidence="11">387 uM for pyruvate</KM>
        <KM evidence="11">213 uM for acetoacetate</KM>
        <KM evidence="11">209 uM for alpha-ketoisocaproate</KM>
        <KM evidence="17">0.36 mM for 5-oxo-L-proline</KM>
    </kinetics>
</comment>
<comment type="subunit">
    <text evidence="18">Interacts (via PDZ-binding motif) with PDZK1 (via PDZ domains 1 and 3); interaction increases nicotinate transport activity of SLC5A8.</text>
</comment>
<comment type="subcellular location">
    <subcellularLocation>
        <location evidence="3 6 13">Apical cell membrane</location>
        <topology evidence="1">Multi-pass membrane protein</topology>
    </subcellularLocation>
    <text evidence="3 6 13">Expressed at the apical membrane of normal tall thyrocytes and of colonic epithelial cells.</text>
</comment>
<comment type="tissue specificity">
    <text evidence="3 4 5 6 7 8 9 12 13 15">Expressed in normal thyroid, localized at the apical pole of thyroid cells facing the colloid lumen, but expression profoundly decreased in thyroid carcinomas. Expressed in normal colon but absent in colon aberrant crypt foci and colon cancers. Present in normal kidney cortex, brain, prostate, gastric mucosa and breast tissue but was significantly down-regulated in primary gliomas, gastric cancer, prostate tumors and breast tumors.</text>
</comment>
<comment type="induction">
    <text evidence="4 8 9 15">Down-regulated in some primary cancers; due to aberrant methylation in primary colon cancers, astrocytomas and oligodendrogliomas as well as in cancers of the colon, prostate and gastric regions, and glial cell lines. Expression reactivated on treatment with a demethylating drug, 5-azacytidine.</text>
</comment>
<comment type="similarity">
    <text evidence="1">Belongs to the sodium:solute symporter (SSF) (TC 2.A.21) family.</text>
</comment>
<comment type="online information" name="Atlas of Genetics and Cytogenetics in Oncology and Haematology">
    <link uri="https://atlasgeneticsoncology.org/gene/44089/SLC5A8"/>
</comment>
<sequence>MDTPRGIGTFVVWDYVVFAGMLVISAAIGIYYAFAGGGQQTSKDFLMGGRRMTAVPVALSLTASFMSAVTVLGTPSEVYRFGAIFSIFAFTYFFVVVISAEVFLPVFYKLGITSTYEYLELRFNKCVRLCGTVLFIVQTILYTGIVIYAPALALNQVTGFDLWGAVVATGVVCTFYCTLGGLKAVIWTDVFQVGIMVAGFASVIIQAVVMQGGISTILNDAYDGGRLNFWNFNPNPLQRHTFWTIIIGGTFTWTSIYGVNQSQVQRYISCKSRFQAKLSLYINLVGLWAILTCSVFCGLALYSRYHDCDPWTAKKVSAPDQLMPYLVLDILQDYPGLPGLFVACAYSGTLSTVSSSINALAAVTVEDLIKPYFRSLSERSLSWISQGMSVVYGALCIGMAALASLMGALLQAALSVFGMVGGPLMGLFALGILVPFANSIGALVGLMAGFAISLWVGIGAQIYPPLPERTLPLHLDIQGCNSTYNETNLMTTTEMPFTTSVFQIYNVQRTPLMDNWYSLSYLYFSTVGTLVTLLVGILVSLSTGGRKQNLDPRYILTKEDFLSNFDIFKKKKHVLSYKSHPVEDGGTDNPAFNHIELNSDQSGKSNGTRL</sequence>
<accession>Q8N695</accession>
<accession>Q2TB99</accession>
<accession>Q7Z2H9</accession>